<proteinExistence type="inferred from homology"/>
<accession>P37134</accession>
<protein>
    <recommendedName>
        <fullName>N-acetylmuramoyl-L-alanine amidase CwlM</fullName>
        <ecNumber>3.5.1.28</ecNumber>
    </recommendedName>
    <alternativeName>
        <fullName>Autolysin</fullName>
    </alternativeName>
    <alternativeName>
        <fullName>Cell wall hydrolase</fullName>
    </alternativeName>
</protein>
<sequence length="253" mass="27600">MVKIFIDPGHGGSDTGASANGLQEKQLTLQTALALRNMLLNEYQNVSVLLSRTSDQTVSLTQRTNAANSWGADYFLSIHMNAGGGTGFEDYIYPGVGAPTTTYRDIMHEEILKVVDFRDRGKKTANFHVLRETAMPALLTENGFVDNTNDAEKLKSSAFIQSIARGHANGLARAFNLSKNAAALYKVQIAAFRTKANADSLAAQAEAKGFDALVIYRDSLYKVQIGAFSSKENAEALVQQAKNAEFDTFIYQE</sequence>
<feature type="chain" id="PRO_0000164420" description="N-acetylmuramoyl-L-alanine amidase CwlM">
    <location>
        <begin position="1"/>
        <end position="253"/>
    </location>
</feature>
<feature type="domain" description="MurNAc-LAA" evidence="1">
    <location>
        <begin position="4"/>
        <end position="172"/>
    </location>
</feature>
<feature type="domain" description="SPOR">
    <location>
        <begin position="179"/>
        <end position="253"/>
    </location>
</feature>
<feature type="repeat" description="1">
    <location>
        <begin position="184"/>
        <end position="219"/>
    </location>
</feature>
<feature type="repeat" description="2">
    <location>
        <begin position="220"/>
        <end position="253"/>
    </location>
</feature>
<feature type="region of interest" description="2 X 35 AA approximate tandem repeats">
    <location>
        <begin position="184"/>
        <end position="253"/>
    </location>
</feature>
<keyword id="KW-0961">Cell wall biogenesis/degradation</keyword>
<keyword id="KW-0378">Hydrolase</keyword>
<keyword id="KW-0677">Repeat</keyword>
<keyword id="KW-0964">Secreted</keyword>
<name>CWLM_BACLI</name>
<dbReference type="EC" id="3.5.1.28"/>
<dbReference type="EMBL" id="X62116">
    <property type="protein sequence ID" value="CAA44026.1"/>
    <property type="molecule type" value="Genomic_DNA"/>
</dbReference>
<dbReference type="PIR" id="S23572">
    <property type="entry name" value="S23572"/>
</dbReference>
<dbReference type="SMR" id="P37134"/>
<dbReference type="GO" id="GO:0005576">
    <property type="term" value="C:extracellular region"/>
    <property type="evidence" value="ECO:0007669"/>
    <property type="project" value="UniProtKB-SubCell"/>
</dbReference>
<dbReference type="GO" id="GO:0030288">
    <property type="term" value="C:outer membrane-bounded periplasmic space"/>
    <property type="evidence" value="ECO:0007669"/>
    <property type="project" value="TreeGrafter"/>
</dbReference>
<dbReference type="GO" id="GO:0008745">
    <property type="term" value="F:N-acetylmuramoyl-L-alanine amidase activity"/>
    <property type="evidence" value="ECO:0007669"/>
    <property type="project" value="UniProtKB-EC"/>
</dbReference>
<dbReference type="GO" id="GO:0042834">
    <property type="term" value="F:peptidoglycan binding"/>
    <property type="evidence" value="ECO:0007669"/>
    <property type="project" value="InterPro"/>
</dbReference>
<dbReference type="GO" id="GO:0071555">
    <property type="term" value="P:cell wall organization"/>
    <property type="evidence" value="ECO:0007669"/>
    <property type="project" value="UniProtKB-KW"/>
</dbReference>
<dbReference type="GO" id="GO:0009253">
    <property type="term" value="P:peptidoglycan catabolic process"/>
    <property type="evidence" value="ECO:0007669"/>
    <property type="project" value="InterPro"/>
</dbReference>
<dbReference type="CDD" id="cd02696">
    <property type="entry name" value="MurNAc-LAA"/>
    <property type="match status" value="1"/>
</dbReference>
<dbReference type="Gene3D" id="3.30.70.1070">
    <property type="entry name" value="Sporulation related repeat"/>
    <property type="match status" value="1"/>
</dbReference>
<dbReference type="Gene3D" id="3.40.630.40">
    <property type="entry name" value="Zn-dependent exopeptidases"/>
    <property type="match status" value="1"/>
</dbReference>
<dbReference type="InterPro" id="IPR002508">
    <property type="entry name" value="MurNAc-LAA_cat"/>
</dbReference>
<dbReference type="InterPro" id="IPR050695">
    <property type="entry name" value="N-acetylmuramoyl_amidase_3"/>
</dbReference>
<dbReference type="InterPro" id="IPR007730">
    <property type="entry name" value="SPOR-like_dom"/>
</dbReference>
<dbReference type="InterPro" id="IPR036680">
    <property type="entry name" value="SPOR-like_sf"/>
</dbReference>
<dbReference type="PANTHER" id="PTHR30404">
    <property type="entry name" value="N-ACETYLMURAMOYL-L-ALANINE AMIDASE"/>
    <property type="match status" value="1"/>
</dbReference>
<dbReference type="PANTHER" id="PTHR30404:SF0">
    <property type="entry name" value="N-ACETYLMURAMOYL-L-ALANINE AMIDASE AMIC"/>
    <property type="match status" value="1"/>
</dbReference>
<dbReference type="Pfam" id="PF01520">
    <property type="entry name" value="Amidase_3"/>
    <property type="match status" value="1"/>
</dbReference>
<dbReference type="Pfam" id="PF05036">
    <property type="entry name" value="SPOR"/>
    <property type="match status" value="1"/>
</dbReference>
<dbReference type="SMART" id="SM00646">
    <property type="entry name" value="Ami_3"/>
    <property type="match status" value="1"/>
</dbReference>
<dbReference type="SUPFAM" id="SSF110997">
    <property type="entry name" value="Sporulation related repeat"/>
    <property type="match status" value="1"/>
</dbReference>
<dbReference type="SUPFAM" id="SSF53187">
    <property type="entry name" value="Zn-dependent exopeptidases"/>
    <property type="match status" value="1"/>
</dbReference>
<dbReference type="PROSITE" id="PS51724">
    <property type="entry name" value="SPOR"/>
    <property type="match status" value="1"/>
</dbReference>
<organism>
    <name type="scientific">Bacillus licheniformis</name>
    <dbReference type="NCBI Taxonomy" id="1402"/>
    <lineage>
        <taxon>Bacteria</taxon>
        <taxon>Bacillati</taxon>
        <taxon>Bacillota</taxon>
        <taxon>Bacilli</taxon>
        <taxon>Bacillales</taxon>
        <taxon>Bacillaceae</taxon>
        <taxon>Bacillus</taxon>
    </lineage>
</organism>
<comment type="function">
    <text>Hydrolyzes the cell wall of M.luteus more efficiently than that of B.licheniformis and B.subtilis. The C-terminal region, including the repeats, determines substrate specificity.</text>
</comment>
<comment type="catalytic activity">
    <reaction>
        <text>Hydrolyzes the link between N-acetylmuramoyl residues and L-amino acid residues in certain cell-wall glycopeptides.</text>
        <dbReference type="EC" id="3.5.1.28"/>
    </reaction>
</comment>
<comment type="subcellular location">
    <subcellularLocation>
        <location evidence="2">Secreted</location>
    </subcellularLocation>
    <text>Accumulates in cells as inclusion bodies. May be secreted by a mechanism different from the normal export system.</text>
</comment>
<comment type="similarity">
    <text evidence="2">Belongs to the N-acetylmuramoyl-L-alanine amidase 3 family.</text>
</comment>
<reference key="1">
    <citation type="journal article" date="1992" name="Mol. Gen. Genet.">
        <title>Genetic structure, isolation and characterization of a Bacillus licheniformis cell wall hydrolase.</title>
        <authorList>
            <person name="Kuroda A."/>
            <person name="Sugimoto Y."/>
            <person name="Funahashi T."/>
            <person name="Sekiguchi J."/>
        </authorList>
    </citation>
    <scope>NUCLEOTIDE SEQUENCE [GENOMIC DNA]</scope>
    <source>
        <strain>FD0120</strain>
    </source>
</reference>
<evidence type="ECO:0000255" key="1"/>
<evidence type="ECO:0000305" key="2"/>
<gene>
    <name type="primary">cwlM</name>
</gene>